<accession>Q9HDZ7</accession>
<name>ATG18_SCHPO</name>
<organism>
    <name type="scientific">Schizosaccharomyces pombe (strain 972 / ATCC 24843)</name>
    <name type="common">Fission yeast</name>
    <dbReference type="NCBI Taxonomy" id="284812"/>
    <lineage>
        <taxon>Eukaryota</taxon>
        <taxon>Fungi</taxon>
        <taxon>Dikarya</taxon>
        <taxon>Ascomycota</taxon>
        <taxon>Taphrinomycotina</taxon>
        <taxon>Schizosaccharomycetes</taxon>
        <taxon>Schizosaccharomycetales</taxon>
        <taxon>Schizosaccharomycetaceae</taxon>
        <taxon>Schizosaccharomyces</taxon>
    </lineage>
</organism>
<keyword id="KW-0072">Autophagy</keyword>
<keyword id="KW-0967">Endosome</keyword>
<keyword id="KW-0472">Membrane</keyword>
<keyword id="KW-0653">Protein transport</keyword>
<keyword id="KW-1185">Reference proteome</keyword>
<keyword id="KW-0677">Repeat</keyword>
<keyword id="KW-0813">Transport</keyword>
<keyword id="KW-0926">Vacuole</keyword>
<keyword id="KW-0853">WD repeat</keyword>
<protein>
    <recommendedName>
        <fullName>Autophagy-related protein 18</fullName>
    </recommendedName>
</protein>
<feature type="chain" id="PRO_0000050872" description="Autophagy-related protein 18">
    <location>
        <begin position="1"/>
        <end position="373"/>
    </location>
</feature>
<feature type="repeat" description="WD 1">
    <location>
        <begin position="144"/>
        <end position="183"/>
    </location>
</feature>
<feature type="repeat" description="WD 2">
    <location>
        <begin position="186"/>
        <end position="226"/>
    </location>
</feature>
<feature type="repeat" description="WD 3">
    <location>
        <begin position="231"/>
        <end position="270"/>
    </location>
</feature>
<feature type="region of interest" description="Disordered" evidence="2">
    <location>
        <begin position="142"/>
        <end position="163"/>
    </location>
</feature>
<feature type="short sequence motif" description="L/FRRG motif" evidence="4">
    <location>
        <begin position="227"/>
        <end position="231"/>
    </location>
</feature>
<feature type="compositionally biased region" description="Basic and acidic residues" evidence="2">
    <location>
        <begin position="144"/>
        <end position="154"/>
    </location>
</feature>
<feature type="mutagenesis site" description="Impairs localization and pre-autophagosomal structure formation; when associated with Thr-229." evidence="3">
    <original>R</original>
    <variation>T</variation>
    <location>
        <position position="228"/>
    </location>
</feature>
<feature type="mutagenesis site" description="Impairs localization and pre-autophagosomal structure formation; when associated with Thr-228." evidence="3">
    <original>R</original>
    <variation>T</variation>
    <location>
        <position position="229"/>
    </location>
</feature>
<comment type="function">
    <text evidence="1 3">The PI(3,5)P2 regulatory complex regulates both the synthesis and turnover of phosphatidylinositol 3,5-bisphosphate (PtdIns(3,5)P2). Necessary for proper vacuole morphology. Plays an important role in osmotically-induced vacuole fragmentation. Required for cytoplasm to vacuole transport (Cvt) vesicle formation, pexophagy and starvation-induced autophagy. Involved in correct atg9 trafficking to the preautophagosomal structure. Might also be involved in premeiotic DNA replication (By similarity). Required for the recruitment of the atg5-atg12/atg16 complex to the preautophagosomal structure.</text>
</comment>
<comment type="subunit">
    <text evidence="1 3">Component of the PI(3,5)P2 regulatory complex (By similarity). Interacts with atg5.</text>
</comment>
<comment type="subcellular location">
    <subcellularLocation>
        <location evidence="3">Preautophagosomal structure membrane</location>
        <topology evidence="3">Peripheral membrane protein</topology>
    </subcellularLocation>
    <subcellularLocation>
        <location evidence="1">Vacuole membrane</location>
        <topology evidence="1">Peripheral membrane protein</topology>
    </subcellularLocation>
    <subcellularLocation>
        <location evidence="1">Endosome membrane</location>
        <topology evidence="1">Peripheral membrane protein</topology>
    </subcellularLocation>
</comment>
<comment type="domain">
    <text evidence="1">The N-terminus might form a beta-propeller domain involved in specific binding to phosphatidylinositol 3,5-bisphosphate (PIP2), leading to the association of the protein to the membrane.</text>
</comment>
<comment type="domain">
    <text evidence="3">The L/FRRG motif is essential for the cytoplasm to vacuole transport (Cvt) pathway, for the recruitment of atg8 and atg16 to the PAS in nutrient-rich medium, and for its recruitment to and dissociation from the PAS under starvation conditions.</text>
</comment>
<comment type="disruption phenotype">
    <text evidence="3">Impairs atg8-processing.</text>
</comment>
<comment type="similarity">
    <text evidence="5">Belongs to the WD repeat PROPPIN family.</text>
</comment>
<sequence length="373" mass="41109">MHFFVRKYRGKAALLSIGTFDGYKIYNCDPFGKCFHKIQGATSIVEMLFSTSLVALVEKDDGNNRKLKLINTKKSTTICELTFPTPLLAVKLNRKRLLAVLEEQIYVYDISNMLLLHTIETTSNVFAVCALSPNSENCYLAYPDSRDHEPRTEGESSSPNVSNSAVSGQVILWDVINCKQITKIEAHKDSLACLAFNSDGTMLATASDNGRIIRVFAIPSGQRLYQFRRGSLPAQIYSIAFHPDSSLLTVTSSTQTVHIFRLKEVYSNLERQGLLPSSPPPKESLLRRSSRSLIGTVGGYLPQSVSGMLDPERDFAYAHIPGDKVTSIAAFGPDNTIVNVATYDGNLYSFRVNLRTGGECAMVNHFCVGLTAA</sequence>
<gene>
    <name type="primary">atg18</name>
    <name type="synonym">atg18a</name>
    <name type="ORF">SPAC589.07c</name>
</gene>
<proteinExistence type="evidence at protein level"/>
<dbReference type="EMBL" id="CU329670">
    <property type="protein sequence ID" value="CAC19764.1"/>
    <property type="molecule type" value="Genomic_DNA"/>
</dbReference>
<dbReference type="RefSeq" id="NP_594055.1">
    <property type="nucleotide sequence ID" value="NM_001019479.2"/>
</dbReference>
<dbReference type="SMR" id="Q9HDZ7"/>
<dbReference type="BioGRID" id="278655">
    <property type="interactions" value="53"/>
</dbReference>
<dbReference type="FunCoup" id="Q9HDZ7">
    <property type="interactions" value="332"/>
</dbReference>
<dbReference type="STRING" id="284812.Q9HDZ7"/>
<dbReference type="PaxDb" id="4896-SPAC589.07c.1"/>
<dbReference type="EnsemblFungi" id="SPAC589.07c.1">
    <property type="protein sequence ID" value="SPAC589.07c.1:pep"/>
    <property type="gene ID" value="SPAC589.07c"/>
</dbReference>
<dbReference type="GeneID" id="2542180"/>
<dbReference type="KEGG" id="spo:2542180"/>
<dbReference type="PomBase" id="SPAC589.07c"/>
<dbReference type="VEuPathDB" id="FungiDB:SPAC589.07c"/>
<dbReference type="eggNOG" id="KOG2110">
    <property type="taxonomic scope" value="Eukaryota"/>
</dbReference>
<dbReference type="HOGENOM" id="CLU_025895_5_2_1"/>
<dbReference type="InParanoid" id="Q9HDZ7"/>
<dbReference type="OMA" id="ATWGGMF"/>
<dbReference type="PhylomeDB" id="Q9HDZ7"/>
<dbReference type="Reactome" id="R-SPO-1632852">
    <property type="pathway name" value="Macroautophagy"/>
</dbReference>
<dbReference type="PRO" id="PR:Q9HDZ7"/>
<dbReference type="Proteomes" id="UP000002485">
    <property type="component" value="Chromosome I"/>
</dbReference>
<dbReference type="GO" id="GO:0005737">
    <property type="term" value="C:cytoplasm"/>
    <property type="evidence" value="ECO:0007005"/>
    <property type="project" value="PomBase"/>
</dbReference>
<dbReference type="GO" id="GO:0005829">
    <property type="term" value="C:cytosol"/>
    <property type="evidence" value="ECO:0000318"/>
    <property type="project" value="GO_Central"/>
</dbReference>
<dbReference type="GO" id="GO:0005768">
    <property type="term" value="C:endosome"/>
    <property type="evidence" value="ECO:0000314"/>
    <property type="project" value="PomBase"/>
</dbReference>
<dbReference type="GO" id="GO:0010008">
    <property type="term" value="C:endosome membrane"/>
    <property type="evidence" value="ECO:0007669"/>
    <property type="project" value="UniProtKB-SubCell"/>
</dbReference>
<dbReference type="GO" id="GO:0000329">
    <property type="term" value="C:fungal-type vacuole membrane"/>
    <property type="evidence" value="ECO:0000314"/>
    <property type="project" value="PomBase"/>
</dbReference>
<dbReference type="GO" id="GO:0005794">
    <property type="term" value="C:Golgi apparatus"/>
    <property type="evidence" value="ECO:0007005"/>
    <property type="project" value="PomBase"/>
</dbReference>
<dbReference type="GO" id="GO:0000407">
    <property type="term" value="C:phagophore assembly site"/>
    <property type="evidence" value="ECO:0000314"/>
    <property type="project" value="PomBase"/>
</dbReference>
<dbReference type="GO" id="GO:0034045">
    <property type="term" value="C:phagophore assembly site membrane"/>
    <property type="evidence" value="ECO:0000318"/>
    <property type="project" value="GO_Central"/>
</dbReference>
<dbReference type="GO" id="GO:0080025">
    <property type="term" value="F:phosphatidylinositol-3,5-bisphosphate binding"/>
    <property type="evidence" value="ECO:0000318"/>
    <property type="project" value="GO_Central"/>
</dbReference>
<dbReference type="GO" id="GO:0032266">
    <property type="term" value="F:phosphatidylinositol-3-phosphate binding"/>
    <property type="evidence" value="ECO:0000318"/>
    <property type="project" value="GO_Central"/>
</dbReference>
<dbReference type="GO" id="GO:0030674">
    <property type="term" value="F:protein-macromolecule adaptor activity"/>
    <property type="evidence" value="ECO:0000318"/>
    <property type="project" value="GO_Central"/>
</dbReference>
<dbReference type="GO" id="GO:0000422">
    <property type="term" value="P:autophagy of mitochondrion"/>
    <property type="evidence" value="ECO:0000318"/>
    <property type="project" value="GO_Central"/>
</dbReference>
<dbReference type="GO" id="GO:0061723">
    <property type="term" value="P:glycophagy"/>
    <property type="evidence" value="ECO:0000318"/>
    <property type="project" value="GO_Central"/>
</dbReference>
<dbReference type="GO" id="GO:0016236">
    <property type="term" value="P:macroautophagy"/>
    <property type="evidence" value="ECO:0000315"/>
    <property type="project" value="PomBase"/>
</dbReference>
<dbReference type="GO" id="GO:0044804">
    <property type="term" value="P:nucleophagy"/>
    <property type="evidence" value="ECO:0000318"/>
    <property type="project" value="GO_Central"/>
</dbReference>
<dbReference type="GO" id="GO:0000425">
    <property type="term" value="P:pexophagy"/>
    <property type="evidence" value="ECO:0000318"/>
    <property type="project" value="GO_Central"/>
</dbReference>
<dbReference type="GO" id="GO:0034497">
    <property type="term" value="P:protein localization to phagophore assembly site"/>
    <property type="evidence" value="ECO:0000318"/>
    <property type="project" value="GO_Central"/>
</dbReference>
<dbReference type="GO" id="GO:0015031">
    <property type="term" value="P:protein transport"/>
    <property type="evidence" value="ECO:0007669"/>
    <property type="project" value="UniProtKB-KW"/>
</dbReference>
<dbReference type="Gene3D" id="2.130.10.10">
    <property type="entry name" value="YVTN repeat-like/Quinoprotein amine dehydrogenase"/>
    <property type="match status" value="1"/>
</dbReference>
<dbReference type="InterPro" id="IPR048720">
    <property type="entry name" value="PROPPIN"/>
</dbReference>
<dbReference type="InterPro" id="IPR015943">
    <property type="entry name" value="WD40/YVTN_repeat-like_dom_sf"/>
</dbReference>
<dbReference type="InterPro" id="IPR036322">
    <property type="entry name" value="WD40_repeat_dom_sf"/>
</dbReference>
<dbReference type="InterPro" id="IPR001680">
    <property type="entry name" value="WD40_rpt"/>
</dbReference>
<dbReference type="PANTHER" id="PTHR11227">
    <property type="entry name" value="WD-REPEAT PROTEIN INTERACTING WITH PHOSPHOINOSIDES WIPI -RELATED"/>
    <property type="match status" value="1"/>
</dbReference>
<dbReference type="Pfam" id="PF21032">
    <property type="entry name" value="PROPPIN"/>
    <property type="match status" value="1"/>
</dbReference>
<dbReference type="SMART" id="SM00320">
    <property type="entry name" value="WD40"/>
    <property type="match status" value="3"/>
</dbReference>
<dbReference type="SUPFAM" id="SSF50978">
    <property type="entry name" value="WD40 repeat-like"/>
    <property type="match status" value="1"/>
</dbReference>
<dbReference type="PROSITE" id="PS50082">
    <property type="entry name" value="WD_REPEATS_2"/>
    <property type="match status" value="1"/>
</dbReference>
<dbReference type="PROSITE" id="PS50294">
    <property type="entry name" value="WD_REPEATS_REGION"/>
    <property type="match status" value="1"/>
</dbReference>
<evidence type="ECO:0000250" key="1"/>
<evidence type="ECO:0000256" key="2">
    <source>
        <dbReference type="SAM" id="MobiDB-lite"/>
    </source>
</evidence>
<evidence type="ECO:0000269" key="3">
    <source>
    </source>
</evidence>
<evidence type="ECO:0000303" key="4">
    <source>
    </source>
</evidence>
<evidence type="ECO:0000305" key="5"/>
<reference key="1">
    <citation type="journal article" date="2002" name="Nature">
        <title>The genome sequence of Schizosaccharomyces pombe.</title>
        <authorList>
            <person name="Wood V."/>
            <person name="Gwilliam R."/>
            <person name="Rajandream M.A."/>
            <person name="Lyne M.H."/>
            <person name="Lyne R."/>
            <person name="Stewart A."/>
            <person name="Sgouros J.G."/>
            <person name="Peat N."/>
            <person name="Hayles J."/>
            <person name="Baker S.G."/>
            <person name="Basham D."/>
            <person name="Bowman S."/>
            <person name="Brooks K."/>
            <person name="Brown D."/>
            <person name="Brown S."/>
            <person name="Chillingworth T."/>
            <person name="Churcher C.M."/>
            <person name="Collins M."/>
            <person name="Connor R."/>
            <person name="Cronin A."/>
            <person name="Davis P."/>
            <person name="Feltwell T."/>
            <person name="Fraser A."/>
            <person name="Gentles S."/>
            <person name="Goble A."/>
            <person name="Hamlin N."/>
            <person name="Harris D.E."/>
            <person name="Hidalgo J."/>
            <person name="Hodgson G."/>
            <person name="Holroyd S."/>
            <person name="Hornsby T."/>
            <person name="Howarth S."/>
            <person name="Huckle E.J."/>
            <person name="Hunt S."/>
            <person name="Jagels K."/>
            <person name="James K.D."/>
            <person name="Jones L."/>
            <person name="Jones M."/>
            <person name="Leather S."/>
            <person name="McDonald S."/>
            <person name="McLean J."/>
            <person name="Mooney P."/>
            <person name="Moule S."/>
            <person name="Mungall K.L."/>
            <person name="Murphy L.D."/>
            <person name="Niblett D."/>
            <person name="Odell C."/>
            <person name="Oliver K."/>
            <person name="O'Neil S."/>
            <person name="Pearson D."/>
            <person name="Quail M.A."/>
            <person name="Rabbinowitsch E."/>
            <person name="Rutherford K.M."/>
            <person name="Rutter S."/>
            <person name="Saunders D."/>
            <person name="Seeger K."/>
            <person name="Sharp S."/>
            <person name="Skelton J."/>
            <person name="Simmonds M.N."/>
            <person name="Squares R."/>
            <person name="Squares S."/>
            <person name="Stevens K."/>
            <person name="Taylor K."/>
            <person name="Taylor R.G."/>
            <person name="Tivey A."/>
            <person name="Walsh S.V."/>
            <person name="Warren T."/>
            <person name="Whitehead S."/>
            <person name="Woodward J.R."/>
            <person name="Volckaert G."/>
            <person name="Aert R."/>
            <person name="Robben J."/>
            <person name="Grymonprez B."/>
            <person name="Weltjens I."/>
            <person name="Vanstreels E."/>
            <person name="Rieger M."/>
            <person name="Schaefer M."/>
            <person name="Mueller-Auer S."/>
            <person name="Gabel C."/>
            <person name="Fuchs M."/>
            <person name="Duesterhoeft A."/>
            <person name="Fritzc C."/>
            <person name="Holzer E."/>
            <person name="Moestl D."/>
            <person name="Hilbert H."/>
            <person name="Borzym K."/>
            <person name="Langer I."/>
            <person name="Beck A."/>
            <person name="Lehrach H."/>
            <person name="Reinhardt R."/>
            <person name="Pohl T.M."/>
            <person name="Eger P."/>
            <person name="Zimmermann W."/>
            <person name="Wedler H."/>
            <person name="Wambutt R."/>
            <person name="Purnelle B."/>
            <person name="Goffeau A."/>
            <person name="Cadieu E."/>
            <person name="Dreano S."/>
            <person name="Gloux S."/>
            <person name="Lelaure V."/>
            <person name="Mottier S."/>
            <person name="Galibert F."/>
            <person name="Aves S.J."/>
            <person name="Xiang Z."/>
            <person name="Hunt C."/>
            <person name="Moore K."/>
            <person name="Hurst S.M."/>
            <person name="Lucas M."/>
            <person name="Rochet M."/>
            <person name="Gaillardin C."/>
            <person name="Tallada V.A."/>
            <person name="Garzon A."/>
            <person name="Thode G."/>
            <person name="Daga R.R."/>
            <person name="Cruzado L."/>
            <person name="Jimenez J."/>
            <person name="Sanchez M."/>
            <person name="del Rey F."/>
            <person name="Benito J."/>
            <person name="Dominguez A."/>
            <person name="Revuelta J.L."/>
            <person name="Moreno S."/>
            <person name="Armstrong J."/>
            <person name="Forsburg S.L."/>
            <person name="Cerutti L."/>
            <person name="Lowe T."/>
            <person name="McCombie W.R."/>
            <person name="Paulsen I."/>
            <person name="Potashkin J."/>
            <person name="Shpakovski G.V."/>
            <person name="Ussery D."/>
            <person name="Barrell B.G."/>
            <person name="Nurse P."/>
        </authorList>
    </citation>
    <scope>NUCLEOTIDE SEQUENCE [LARGE SCALE GENOMIC DNA]</scope>
    <source>
        <strain>972 / ATCC 24843</strain>
    </source>
</reference>
<reference key="2">
    <citation type="journal article" date="2013" name="PLoS Genet.">
        <title>Global analysis of fission yeast mating genes reveals new autophagy factors.</title>
        <authorList>
            <person name="Sun L.L."/>
            <person name="Li M."/>
            <person name="Suo F."/>
            <person name="Liu X.M."/>
            <person name="Shen E.Z."/>
            <person name="Yang B."/>
            <person name="Dong M.Q."/>
            <person name="He W.Z."/>
            <person name="Du L.L."/>
        </authorList>
    </citation>
    <scope>DISRUPTION PHENOTYPE</scope>
    <scope>SUBCELLULAR LOCATION</scope>
    <scope>FUNCTION</scope>
    <scope>INTERACTION WITH ATG5</scope>
    <scope>DOMAIN</scope>
    <scope>MUTAGENESIS OF ARG-228 AND ARG-229</scope>
</reference>